<protein>
    <recommendedName>
        <fullName>Uncharacterized protein CP312R</fullName>
        <shortName>pCP312R</shortName>
    </recommendedName>
</protein>
<name>VF312_ASFP4</name>
<proteinExistence type="inferred from homology"/>
<comment type="subcellular location">
    <subcellularLocation>
        <location evidence="1">Virion</location>
    </subcellularLocation>
</comment>
<comment type="induction">
    <text evidence="2">Expressed in the early phase of the viral replicative cycle.</text>
</comment>
<comment type="similarity">
    <text evidence="2">Belongs to the asfivirus CP312R family.</text>
</comment>
<feature type="chain" id="PRO_0000373637" description="Uncharacterized protein CP312R">
    <location>
        <begin position="1"/>
        <end position="312"/>
    </location>
</feature>
<organism>
    <name type="scientific">African swine fever virus (isolate Tick/South Africa/Pretoriuskop Pr4/1996)</name>
    <name type="common">ASFV</name>
    <dbReference type="NCBI Taxonomy" id="561443"/>
    <lineage>
        <taxon>Viruses</taxon>
        <taxon>Varidnaviria</taxon>
        <taxon>Bamfordvirae</taxon>
        <taxon>Nucleocytoviricota</taxon>
        <taxon>Pokkesviricetes</taxon>
        <taxon>Asfuvirales</taxon>
        <taxon>Asfarviridae</taxon>
        <taxon>Asfivirus</taxon>
        <taxon>African swine fever virus</taxon>
    </lineage>
</organism>
<organismHost>
    <name type="scientific">Ornithodoros</name>
    <name type="common">relapsing fever ticks</name>
    <dbReference type="NCBI Taxonomy" id="6937"/>
</organismHost>
<organismHost>
    <name type="scientific">Phacochoerus aethiopicus</name>
    <name type="common">Warthog</name>
    <dbReference type="NCBI Taxonomy" id="85517"/>
</organismHost>
<organismHost>
    <name type="scientific">Phacochoerus africanus</name>
    <name type="common">Warthog</name>
    <dbReference type="NCBI Taxonomy" id="41426"/>
</organismHost>
<organismHost>
    <name type="scientific">Potamochoerus larvatus</name>
    <name type="common">Bushpig</name>
    <dbReference type="NCBI Taxonomy" id="273792"/>
</organismHost>
<organismHost>
    <name type="scientific">Sus scrofa</name>
    <name type="common">Pig</name>
    <dbReference type="NCBI Taxonomy" id="9823"/>
</organismHost>
<sequence length="312" mass="35065">MLLVKMTTHIFNADELLQALQQAKAEKNFSSVFSLDWDKLRTAKRNTTVKYVTVNVIVKGKKAPLMFNFQNEKHVGTIPPSTDEEVIRMNAENPKFLVKKRDRDPCLQFNKYKISPPLEDDGLTVKKNEQGEEIYPGDEEKSKLFQIIELLEEAFEDAVQKGPETMKTKHVIKLIQRKISNSAAKNADKPLPNPIARIRIKINSGTNILTPILLNKSKPITLQNGKTSFEELKDEDGVKANPDNIHKLIESHSIHDGIINARSICISNMGISFPLCLEMGVVKVFEKNNGINVDSIYSSDDISTLVNQIAIA</sequence>
<gene>
    <name type="ordered locus">Pret-108</name>
</gene>
<keyword id="KW-0244">Early protein</keyword>
<keyword id="KW-0946">Virion</keyword>
<reference key="1">
    <citation type="submission" date="2003-03" db="EMBL/GenBank/DDBJ databases">
        <title>African swine fever virus genomes.</title>
        <authorList>
            <person name="Kutish G.F."/>
            <person name="Rock D.L."/>
        </authorList>
    </citation>
    <scope>NUCLEOTIDE SEQUENCE [GENOMIC DNA]</scope>
</reference>
<dbReference type="EMBL" id="AY261363">
    <property type="status" value="NOT_ANNOTATED_CDS"/>
    <property type="molecule type" value="Genomic_DNA"/>
</dbReference>
<dbReference type="SMR" id="P0CAD3"/>
<dbReference type="Proteomes" id="UP000000859">
    <property type="component" value="Segment"/>
</dbReference>
<dbReference type="GO" id="GO:0044423">
    <property type="term" value="C:virion component"/>
    <property type="evidence" value="ECO:0007669"/>
    <property type="project" value="UniProtKB-KW"/>
</dbReference>
<accession>P0CAD3</accession>
<evidence type="ECO:0000250" key="1">
    <source>
        <dbReference type="UniProtKB" id="Q65180"/>
    </source>
</evidence>
<evidence type="ECO:0000305" key="2"/>